<dbReference type="EC" id="2.5.1.145" evidence="1"/>
<dbReference type="EMBL" id="CP000548">
    <property type="protein sequence ID" value="ABO05113.1"/>
    <property type="molecule type" value="Genomic_DNA"/>
</dbReference>
<dbReference type="RefSeq" id="WP_004191241.1">
    <property type="nucleotide sequence ID" value="NZ_CP007802.1"/>
</dbReference>
<dbReference type="SMR" id="A3MLQ2"/>
<dbReference type="GeneID" id="93059470"/>
<dbReference type="KEGG" id="bmaz:BM44_1530"/>
<dbReference type="KEGG" id="bmn:BMA10247_1644"/>
<dbReference type="PATRIC" id="fig|320389.8.peg.1711"/>
<dbReference type="UniPathway" id="UPA00664"/>
<dbReference type="GO" id="GO:0005886">
    <property type="term" value="C:plasma membrane"/>
    <property type="evidence" value="ECO:0007669"/>
    <property type="project" value="UniProtKB-SubCell"/>
</dbReference>
<dbReference type="GO" id="GO:0008961">
    <property type="term" value="F:phosphatidylglycerol-prolipoprotein diacylglyceryl transferase activity"/>
    <property type="evidence" value="ECO:0007669"/>
    <property type="project" value="UniProtKB-UniRule"/>
</dbReference>
<dbReference type="GO" id="GO:0042158">
    <property type="term" value="P:lipoprotein biosynthetic process"/>
    <property type="evidence" value="ECO:0007669"/>
    <property type="project" value="UniProtKB-UniRule"/>
</dbReference>
<dbReference type="HAMAP" id="MF_01147">
    <property type="entry name" value="Lgt"/>
    <property type="match status" value="1"/>
</dbReference>
<dbReference type="InterPro" id="IPR001640">
    <property type="entry name" value="Lgt"/>
</dbReference>
<dbReference type="NCBIfam" id="TIGR00544">
    <property type="entry name" value="lgt"/>
    <property type="match status" value="1"/>
</dbReference>
<dbReference type="PANTHER" id="PTHR30589:SF0">
    <property type="entry name" value="PHOSPHATIDYLGLYCEROL--PROLIPOPROTEIN DIACYLGLYCERYL TRANSFERASE"/>
    <property type="match status" value="1"/>
</dbReference>
<dbReference type="PANTHER" id="PTHR30589">
    <property type="entry name" value="PROLIPOPROTEIN DIACYLGLYCERYL TRANSFERASE"/>
    <property type="match status" value="1"/>
</dbReference>
<dbReference type="Pfam" id="PF01790">
    <property type="entry name" value="LGT"/>
    <property type="match status" value="1"/>
</dbReference>
<dbReference type="PROSITE" id="PS01311">
    <property type="entry name" value="LGT"/>
    <property type="match status" value="1"/>
</dbReference>
<keyword id="KW-0997">Cell inner membrane</keyword>
<keyword id="KW-1003">Cell membrane</keyword>
<keyword id="KW-0472">Membrane</keyword>
<keyword id="KW-0808">Transferase</keyword>
<keyword id="KW-0812">Transmembrane</keyword>
<keyword id="KW-1133">Transmembrane helix</keyword>
<protein>
    <recommendedName>
        <fullName evidence="1">Phosphatidylglycerol--prolipoprotein diacylglyceryl transferase</fullName>
        <ecNumber evidence="1">2.5.1.145</ecNumber>
    </recommendedName>
</protein>
<comment type="function">
    <text evidence="1">Catalyzes the transfer of the diacylglyceryl group from phosphatidylglycerol to the sulfhydryl group of the N-terminal cysteine of a prolipoprotein, the first step in the formation of mature lipoproteins.</text>
</comment>
<comment type="catalytic activity">
    <reaction evidence="1">
        <text>L-cysteinyl-[prolipoprotein] + a 1,2-diacyl-sn-glycero-3-phospho-(1'-sn-glycerol) = an S-1,2-diacyl-sn-glyceryl-L-cysteinyl-[prolipoprotein] + sn-glycerol 1-phosphate + H(+)</text>
        <dbReference type="Rhea" id="RHEA:56712"/>
        <dbReference type="Rhea" id="RHEA-COMP:14679"/>
        <dbReference type="Rhea" id="RHEA-COMP:14680"/>
        <dbReference type="ChEBI" id="CHEBI:15378"/>
        <dbReference type="ChEBI" id="CHEBI:29950"/>
        <dbReference type="ChEBI" id="CHEBI:57685"/>
        <dbReference type="ChEBI" id="CHEBI:64716"/>
        <dbReference type="ChEBI" id="CHEBI:140658"/>
        <dbReference type="EC" id="2.5.1.145"/>
    </reaction>
</comment>
<comment type="pathway">
    <text evidence="1">Protein modification; lipoprotein biosynthesis (diacylglyceryl transfer).</text>
</comment>
<comment type="subcellular location">
    <subcellularLocation>
        <location evidence="1">Cell inner membrane</location>
        <topology evidence="1">Multi-pass membrane protein</topology>
    </subcellularLocation>
</comment>
<comment type="similarity">
    <text evidence="1">Belongs to the Lgt family.</text>
</comment>
<sequence>MIIHPNFDPVAIHLGPLAVRWYGLMYLVGFILAIVVGRLRLKLPHVAAQGWSAKDIDDMMFYGVLGVVLGGRLGYVLFYKAGYYFSHPLDIFRVWEGGMSFHGGFLGVTLAMALFAWQRKRHWLEVTDFVAPMVPTGLAAGRLGNFINGELWGRVTSPDAPWAMLFPGASRDDAAWLAAHQDIAAKWNLNEVFLSHQMLPRHPSQLYEIALEGIALFFVLWFFSRKPRPMGAISALFLIGYGAARFTVEFAREPDDFLGLLTFGLSMGQWLSLPMIVAGVLMMIWAYRRGGVAKQA</sequence>
<reference key="1">
    <citation type="journal article" date="2010" name="Genome Biol. Evol.">
        <title>Continuing evolution of Burkholderia mallei through genome reduction and large-scale rearrangements.</title>
        <authorList>
            <person name="Losada L."/>
            <person name="Ronning C.M."/>
            <person name="DeShazer D."/>
            <person name="Woods D."/>
            <person name="Fedorova N."/>
            <person name="Kim H.S."/>
            <person name="Shabalina S.A."/>
            <person name="Pearson T.R."/>
            <person name="Brinkac L."/>
            <person name="Tan P."/>
            <person name="Nandi T."/>
            <person name="Crabtree J."/>
            <person name="Badger J."/>
            <person name="Beckstrom-Sternberg S."/>
            <person name="Saqib M."/>
            <person name="Schutzer S.E."/>
            <person name="Keim P."/>
            <person name="Nierman W.C."/>
        </authorList>
    </citation>
    <scope>NUCLEOTIDE SEQUENCE [LARGE SCALE GENOMIC DNA]</scope>
    <source>
        <strain>NCTC 10247</strain>
    </source>
</reference>
<evidence type="ECO:0000255" key="1">
    <source>
        <dbReference type="HAMAP-Rule" id="MF_01147"/>
    </source>
</evidence>
<gene>
    <name evidence="1" type="primary">lgt</name>
    <name type="ordered locus">BMA10247_1644</name>
</gene>
<name>LGT_BURM7</name>
<feature type="chain" id="PRO_1000053399" description="Phosphatidylglycerol--prolipoprotein diacylglyceryl transferase">
    <location>
        <begin position="1"/>
        <end position="296"/>
    </location>
</feature>
<feature type="transmembrane region" description="Helical" evidence="1">
    <location>
        <begin position="17"/>
        <end position="37"/>
    </location>
</feature>
<feature type="transmembrane region" description="Helical" evidence="1">
    <location>
        <begin position="59"/>
        <end position="79"/>
    </location>
</feature>
<feature type="transmembrane region" description="Helical" evidence="1">
    <location>
        <begin position="97"/>
        <end position="117"/>
    </location>
</feature>
<feature type="transmembrane region" description="Helical" evidence="1">
    <location>
        <begin position="230"/>
        <end position="250"/>
    </location>
</feature>
<feature type="transmembrane region" description="Helical" evidence="1">
    <location>
        <begin position="265"/>
        <end position="285"/>
    </location>
</feature>
<feature type="binding site" evidence="1">
    <location>
        <position position="142"/>
    </location>
    <ligand>
        <name>a 1,2-diacyl-sn-glycero-3-phospho-(1'-sn-glycerol)</name>
        <dbReference type="ChEBI" id="CHEBI:64716"/>
    </ligand>
</feature>
<proteinExistence type="inferred from homology"/>
<accession>A3MLQ2</accession>
<organism>
    <name type="scientific">Burkholderia mallei (strain NCTC 10247)</name>
    <dbReference type="NCBI Taxonomy" id="320389"/>
    <lineage>
        <taxon>Bacteria</taxon>
        <taxon>Pseudomonadati</taxon>
        <taxon>Pseudomonadota</taxon>
        <taxon>Betaproteobacteria</taxon>
        <taxon>Burkholderiales</taxon>
        <taxon>Burkholderiaceae</taxon>
        <taxon>Burkholderia</taxon>
        <taxon>pseudomallei group</taxon>
    </lineage>
</organism>